<feature type="chain" id="PRO_0000179678" description="ATP-dependent Clp protease proteolytic subunit">
    <location>
        <begin position="1"/>
        <end position="196"/>
    </location>
</feature>
<feature type="active site" description="Nucleophile" evidence="1">
    <location>
        <position position="96"/>
    </location>
</feature>
<feature type="active site" evidence="1">
    <location>
        <position position="121"/>
    </location>
</feature>
<comment type="function">
    <text evidence="1">Cleaves peptides in various proteins in a process that requires ATP hydrolysis. Has a chymotrypsin-like activity. Plays a major role in the degradation of misfolded proteins.</text>
</comment>
<comment type="catalytic activity">
    <reaction evidence="1">
        <text>Hydrolysis of proteins to small peptides in the presence of ATP and magnesium. alpha-casein is the usual test substrate. In the absence of ATP, only oligopeptides shorter than five residues are hydrolyzed (such as succinyl-Leu-Tyr-|-NHMec, and Leu-Tyr-Leu-|-Tyr-Trp, in which cleavage of the -Tyr-|-Leu- and -Tyr-|-Trp bonds also occurs).</text>
        <dbReference type="EC" id="3.4.21.92"/>
    </reaction>
</comment>
<comment type="subunit">
    <text evidence="1">Fourteen ClpP subunits assemble into 2 heptameric rings which stack back to back to give a disk-like structure with a central cavity, resembling the structure of eukaryotic proteasomes.</text>
</comment>
<comment type="subcellular location">
    <subcellularLocation>
        <location evidence="1">Cytoplasm</location>
    </subcellularLocation>
</comment>
<comment type="similarity">
    <text evidence="1">Belongs to the peptidase S14 family.</text>
</comment>
<evidence type="ECO:0000255" key="1">
    <source>
        <dbReference type="HAMAP-Rule" id="MF_00444"/>
    </source>
</evidence>
<keyword id="KW-0963">Cytoplasm</keyword>
<keyword id="KW-0378">Hydrolase</keyword>
<keyword id="KW-0645">Protease</keyword>
<keyword id="KW-1185">Reference proteome</keyword>
<keyword id="KW-0720">Serine protease</keyword>
<gene>
    <name evidence="1" type="primary">clpP</name>
    <name type="ordered locus">stu0356</name>
</gene>
<dbReference type="EC" id="3.4.21.92" evidence="1"/>
<dbReference type="EMBL" id="CP000023">
    <property type="protein sequence ID" value="AAV60076.1"/>
    <property type="molecule type" value="Genomic_DNA"/>
</dbReference>
<dbReference type="RefSeq" id="WP_002949732.1">
    <property type="nucleotide sequence ID" value="NC_006448.1"/>
</dbReference>
<dbReference type="SMR" id="Q5M5U4"/>
<dbReference type="STRING" id="264199.stu0356"/>
<dbReference type="MEROPS" id="S14.001"/>
<dbReference type="KEGG" id="stl:stu0356"/>
<dbReference type="eggNOG" id="COG0740">
    <property type="taxonomic scope" value="Bacteria"/>
</dbReference>
<dbReference type="HOGENOM" id="CLU_058707_3_2_9"/>
<dbReference type="Proteomes" id="UP000001170">
    <property type="component" value="Chromosome"/>
</dbReference>
<dbReference type="GO" id="GO:0005737">
    <property type="term" value="C:cytoplasm"/>
    <property type="evidence" value="ECO:0007669"/>
    <property type="project" value="UniProtKB-SubCell"/>
</dbReference>
<dbReference type="GO" id="GO:0009368">
    <property type="term" value="C:endopeptidase Clp complex"/>
    <property type="evidence" value="ECO:0007669"/>
    <property type="project" value="TreeGrafter"/>
</dbReference>
<dbReference type="GO" id="GO:0004176">
    <property type="term" value="F:ATP-dependent peptidase activity"/>
    <property type="evidence" value="ECO:0007669"/>
    <property type="project" value="InterPro"/>
</dbReference>
<dbReference type="GO" id="GO:0051117">
    <property type="term" value="F:ATPase binding"/>
    <property type="evidence" value="ECO:0007669"/>
    <property type="project" value="TreeGrafter"/>
</dbReference>
<dbReference type="GO" id="GO:0004252">
    <property type="term" value="F:serine-type endopeptidase activity"/>
    <property type="evidence" value="ECO:0007669"/>
    <property type="project" value="UniProtKB-UniRule"/>
</dbReference>
<dbReference type="GO" id="GO:0006515">
    <property type="term" value="P:protein quality control for misfolded or incompletely synthesized proteins"/>
    <property type="evidence" value="ECO:0007669"/>
    <property type="project" value="TreeGrafter"/>
</dbReference>
<dbReference type="CDD" id="cd07017">
    <property type="entry name" value="S14_ClpP_2"/>
    <property type="match status" value="1"/>
</dbReference>
<dbReference type="FunFam" id="3.90.226.10:FF:000014">
    <property type="entry name" value="ATP-dependent Clp protease proteolytic subunit"/>
    <property type="match status" value="1"/>
</dbReference>
<dbReference type="Gene3D" id="3.90.226.10">
    <property type="entry name" value="2-enoyl-CoA Hydratase, Chain A, domain 1"/>
    <property type="match status" value="1"/>
</dbReference>
<dbReference type="HAMAP" id="MF_00444">
    <property type="entry name" value="ClpP"/>
    <property type="match status" value="1"/>
</dbReference>
<dbReference type="InterPro" id="IPR001907">
    <property type="entry name" value="ClpP"/>
</dbReference>
<dbReference type="InterPro" id="IPR029045">
    <property type="entry name" value="ClpP/crotonase-like_dom_sf"/>
</dbReference>
<dbReference type="InterPro" id="IPR023562">
    <property type="entry name" value="ClpP/TepA"/>
</dbReference>
<dbReference type="InterPro" id="IPR033135">
    <property type="entry name" value="ClpP_His_AS"/>
</dbReference>
<dbReference type="InterPro" id="IPR018215">
    <property type="entry name" value="ClpP_Ser_AS"/>
</dbReference>
<dbReference type="NCBIfam" id="NF001368">
    <property type="entry name" value="PRK00277.1"/>
    <property type="match status" value="1"/>
</dbReference>
<dbReference type="NCBIfam" id="NF009205">
    <property type="entry name" value="PRK12553.1"/>
    <property type="match status" value="1"/>
</dbReference>
<dbReference type="PANTHER" id="PTHR10381">
    <property type="entry name" value="ATP-DEPENDENT CLP PROTEASE PROTEOLYTIC SUBUNIT"/>
    <property type="match status" value="1"/>
</dbReference>
<dbReference type="PANTHER" id="PTHR10381:SF70">
    <property type="entry name" value="ATP-DEPENDENT CLP PROTEASE PROTEOLYTIC SUBUNIT"/>
    <property type="match status" value="1"/>
</dbReference>
<dbReference type="Pfam" id="PF00574">
    <property type="entry name" value="CLP_protease"/>
    <property type="match status" value="1"/>
</dbReference>
<dbReference type="PRINTS" id="PR00127">
    <property type="entry name" value="CLPPROTEASEP"/>
</dbReference>
<dbReference type="SUPFAM" id="SSF52096">
    <property type="entry name" value="ClpP/crotonase"/>
    <property type="match status" value="1"/>
</dbReference>
<dbReference type="PROSITE" id="PS00382">
    <property type="entry name" value="CLP_PROTEASE_HIS"/>
    <property type="match status" value="1"/>
</dbReference>
<dbReference type="PROSITE" id="PS00381">
    <property type="entry name" value="CLP_PROTEASE_SER"/>
    <property type="match status" value="1"/>
</dbReference>
<proteinExistence type="inferred from homology"/>
<organism>
    <name type="scientific">Streptococcus thermophilus (strain ATCC BAA-250 / LMG 18311)</name>
    <dbReference type="NCBI Taxonomy" id="264199"/>
    <lineage>
        <taxon>Bacteria</taxon>
        <taxon>Bacillati</taxon>
        <taxon>Bacillota</taxon>
        <taxon>Bacilli</taxon>
        <taxon>Lactobacillales</taxon>
        <taxon>Streptococcaceae</taxon>
        <taxon>Streptococcus</taxon>
    </lineage>
</organism>
<reference key="1">
    <citation type="journal article" date="2004" name="Nat. Biotechnol.">
        <title>Complete sequence and comparative genome analysis of the dairy bacterium Streptococcus thermophilus.</title>
        <authorList>
            <person name="Bolotin A."/>
            <person name="Quinquis B."/>
            <person name="Renault P."/>
            <person name="Sorokin A."/>
            <person name="Ehrlich S.D."/>
            <person name="Kulakauskas S."/>
            <person name="Lapidus A."/>
            <person name="Goltsman E."/>
            <person name="Mazur M."/>
            <person name="Pusch G.D."/>
            <person name="Fonstein M."/>
            <person name="Overbeek R."/>
            <person name="Kyprides N."/>
            <person name="Purnelle B."/>
            <person name="Prozzi D."/>
            <person name="Ngui K."/>
            <person name="Masuy D."/>
            <person name="Hancy F."/>
            <person name="Burteau S."/>
            <person name="Boutry M."/>
            <person name="Delcour J."/>
            <person name="Goffeau A."/>
            <person name="Hols P."/>
        </authorList>
    </citation>
    <scope>NUCLEOTIDE SEQUENCE [LARGE SCALE GENOMIC DNA]</scope>
    <source>
        <strain>ATCC BAA-250 / LMG 18311</strain>
    </source>
</reference>
<sequence>MIPVVIEQTSRGERSYDIYSRLLKDRIIMLTGPIEDNMANSIIAQLLFLDAQDNTKDIYLYVNTPGGSVSAGLAIVDTMNFIKSDVQTIVMGMAASMGTIIASSGTKGKRFMLPNAEYMIHQPMGGTGGGTQQTDMAIAAEHLLKTRNNLEQILADNSGQPIEKVHVDAERDNWMSAQETLEYGFIDEIMTNNQLK</sequence>
<name>CLPP_STRT2</name>
<protein>
    <recommendedName>
        <fullName evidence="1">ATP-dependent Clp protease proteolytic subunit</fullName>
        <ecNumber evidence="1">3.4.21.92</ecNumber>
    </recommendedName>
    <alternativeName>
        <fullName evidence="1">Endopeptidase Clp</fullName>
    </alternativeName>
</protein>
<accession>Q5M5U4</accession>